<gene>
    <name type="primary">TFEC</name>
    <name type="synonym">TCFEC</name>
</gene>
<organism>
    <name type="scientific">Gallus gallus</name>
    <name type="common">Chicken</name>
    <dbReference type="NCBI Taxonomy" id="9031"/>
    <lineage>
        <taxon>Eukaryota</taxon>
        <taxon>Metazoa</taxon>
        <taxon>Chordata</taxon>
        <taxon>Craniata</taxon>
        <taxon>Vertebrata</taxon>
        <taxon>Euteleostomi</taxon>
        <taxon>Archelosauria</taxon>
        <taxon>Archosauria</taxon>
        <taxon>Dinosauria</taxon>
        <taxon>Saurischia</taxon>
        <taxon>Theropoda</taxon>
        <taxon>Coelurosauria</taxon>
        <taxon>Aves</taxon>
        <taxon>Neognathae</taxon>
        <taxon>Galloanserae</taxon>
        <taxon>Galliformes</taxon>
        <taxon>Phasianidae</taxon>
        <taxon>Phasianinae</taxon>
        <taxon>Gallus</taxon>
    </lineage>
</organism>
<feature type="chain" id="PRO_0000313569" description="Transcription factor EC">
    <location>
        <begin position="1"/>
        <end position="377"/>
    </location>
</feature>
<feature type="domain" description="bHLH" evidence="2">
    <location>
        <begin position="169"/>
        <end position="222"/>
    </location>
</feature>
<feature type="region of interest" description="Disordered" evidence="3">
    <location>
        <begin position="349"/>
        <end position="377"/>
    </location>
</feature>
<feature type="compositionally biased region" description="Low complexity" evidence="3">
    <location>
        <begin position="353"/>
        <end position="370"/>
    </location>
</feature>
<proteinExistence type="evidence at transcript level"/>
<accession>Q5XFQ6</accession>
<accession>Q6RCT8</accession>
<name>TFEC_CHICK</name>
<protein>
    <recommendedName>
        <fullName>Transcription factor EC</fullName>
        <shortName>TFE-C</shortName>
    </recommendedName>
</protein>
<comment type="function">
    <text evidence="1">Transcriptional regulator that acts as a repressor or an activator. Binds DNA (By similarity).</text>
</comment>
<comment type="subcellular location">
    <subcellularLocation>
        <location evidence="2">Nucleus</location>
    </subcellularLocation>
</comment>
<comment type="similarity">
    <text evidence="4">Belongs to the MiT/TFE family.</text>
</comment>
<dbReference type="EMBL" id="AY502941">
    <property type="protein sequence ID" value="AAR83675.1"/>
    <property type="molecule type" value="mRNA"/>
</dbReference>
<dbReference type="EMBL" id="BK004078">
    <property type="protein sequence ID" value="DAA04569.1"/>
    <property type="molecule type" value="mRNA"/>
</dbReference>
<dbReference type="RefSeq" id="NP_001006229.2">
    <property type="nucleotide sequence ID" value="NM_001006229.2"/>
</dbReference>
<dbReference type="SMR" id="Q5XFQ6"/>
<dbReference type="FunCoup" id="Q5XFQ6">
    <property type="interactions" value="2"/>
</dbReference>
<dbReference type="STRING" id="9031.ENSGALP00000047560"/>
<dbReference type="PaxDb" id="9031-ENSGALP00000042575"/>
<dbReference type="GeneID" id="417773"/>
<dbReference type="KEGG" id="gga:417773"/>
<dbReference type="CTD" id="22797"/>
<dbReference type="VEuPathDB" id="HostDB:geneid_417773"/>
<dbReference type="eggNOG" id="KOG1318">
    <property type="taxonomic scope" value="Eukaryota"/>
</dbReference>
<dbReference type="InParanoid" id="Q5XFQ6"/>
<dbReference type="OrthoDB" id="6242697at2759"/>
<dbReference type="PhylomeDB" id="Q5XFQ6"/>
<dbReference type="PRO" id="PR:Q5XFQ6"/>
<dbReference type="Proteomes" id="UP000000539">
    <property type="component" value="Unassembled WGS sequence"/>
</dbReference>
<dbReference type="GO" id="GO:0005634">
    <property type="term" value="C:nucleus"/>
    <property type="evidence" value="ECO:0000318"/>
    <property type="project" value="GO_Central"/>
</dbReference>
<dbReference type="GO" id="GO:0000981">
    <property type="term" value="F:DNA-binding transcription factor activity, RNA polymerase II-specific"/>
    <property type="evidence" value="ECO:0000318"/>
    <property type="project" value="GO_Central"/>
</dbReference>
<dbReference type="GO" id="GO:0046983">
    <property type="term" value="F:protein dimerization activity"/>
    <property type="evidence" value="ECO:0007669"/>
    <property type="project" value="InterPro"/>
</dbReference>
<dbReference type="GO" id="GO:0000978">
    <property type="term" value="F:RNA polymerase II cis-regulatory region sequence-specific DNA binding"/>
    <property type="evidence" value="ECO:0000318"/>
    <property type="project" value="GO_Central"/>
</dbReference>
<dbReference type="GO" id="GO:0006357">
    <property type="term" value="P:regulation of transcription by RNA polymerase II"/>
    <property type="evidence" value="ECO:0000318"/>
    <property type="project" value="GO_Central"/>
</dbReference>
<dbReference type="CDD" id="cd18925">
    <property type="entry name" value="bHLHzip_TFEC"/>
    <property type="match status" value="1"/>
</dbReference>
<dbReference type="FunFam" id="4.10.280.10:FF:000003">
    <property type="entry name" value="microphthalmia-associated transcription factor isoform X1"/>
    <property type="match status" value="1"/>
</dbReference>
<dbReference type="Gene3D" id="4.10.280.10">
    <property type="entry name" value="Helix-loop-helix DNA-binding domain"/>
    <property type="match status" value="1"/>
</dbReference>
<dbReference type="InterPro" id="IPR011598">
    <property type="entry name" value="bHLH_dom"/>
</dbReference>
<dbReference type="InterPro" id="IPR036638">
    <property type="entry name" value="HLH_DNA-bd_sf"/>
</dbReference>
<dbReference type="InterPro" id="IPR021802">
    <property type="entry name" value="MiT/TFE_C"/>
</dbReference>
<dbReference type="InterPro" id="IPR031867">
    <property type="entry name" value="MiT/TFE_N"/>
</dbReference>
<dbReference type="PANTHER" id="PTHR45776">
    <property type="entry name" value="MIP04163P"/>
    <property type="match status" value="1"/>
</dbReference>
<dbReference type="PANTHER" id="PTHR45776:SF1">
    <property type="entry name" value="TRANSCRIPTION FACTOR EC"/>
    <property type="match status" value="1"/>
</dbReference>
<dbReference type="Pfam" id="PF11851">
    <property type="entry name" value="DUF3371"/>
    <property type="match status" value="1"/>
</dbReference>
<dbReference type="Pfam" id="PF00010">
    <property type="entry name" value="HLH"/>
    <property type="match status" value="1"/>
</dbReference>
<dbReference type="Pfam" id="PF15951">
    <property type="entry name" value="MITF_TFEB_C_3_N"/>
    <property type="match status" value="1"/>
</dbReference>
<dbReference type="SMART" id="SM00353">
    <property type="entry name" value="HLH"/>
    <property type="match status" value="1"/>
</dbReference>
<dbReference type="SUPFAM" id="SSF47459">
    <property type="entry name" value="HLH, helix-loop-helix DNA-binding domain"/>
    <property type="match status" value="1"/>
</dbReference>
<dbReference type="PROSITE" id="PS50888">
    <property type="entry name" value="BHLH"/>
    <property type="match status" value="1"/>
</dbReference>
<sequence length="377" mass="42515">MVWVRRWGTTHLENQSRYHIQQSQRYQVKQYLTLDTKLSSQTLSLSHSHTVQPTGVTSIFRNGHMPPVSDIGTPESPVTKLLALGGEHENAMEEVIEDIINMESSFNDEGIGCSETPLLMQRTSILDIYNSDQGMAPANMSLTNASCPANLPVKRELTADTRAMAKERQKKDNHNLIERRRRYNINYRIKELGTLIPKSNDPDMRWNKGTILKASVEYIKWLQKEQQRARELEHRQKKLEHANRRLLLRIQELEIQARAHGLPVMSSLSAVDLAAQVIKQQSYPEENSVDYSQQMPLAHGPNSDVCDGSTAFSDPLSHFTDLSFSAALKEEQQLEEILLDDTVSPFGADPLLSSTSPAASKESSRRSSFSTDDGDDL</sequence>
<evidence type="ECO:0000250" key="1"/>
<evidence type="ECO:0000255" key="2">
    <source>
        <dbReference type="PROSITE-ProRule" id="PRU00981"/>
    </source>
</evidence>
<evidence type="ECO:0000256" key="3">
    <source>
        <dbReference type="SAM" id="MobiDB-lite"/>
    </source>
</evidence>
<evidence type="ECO:0000305" key="4"/>
<reference key="1">
    <citation type="submission" date="2003-12" db="EMBL/GenBank/DDBJ databases">
        <authorList>
            <person name="Rowan S."/>
            <person name="Fisher D.E."/>
        </authorList>
    </citation>
    <scope>NUCLEOTIDE SEQUENCE [MRNA] OF 1-200</scope>
</reference>
<reference key="2">
    <citation type="journal article" date="2004" name="Development">
        <title>Transdifferentiation of the retina into pigmented cells in ocular retardation mice defines a new function of the homeodomain gene Chx10.</title>
        <authorList>
            <person name="Rowan S."/>
            <person name="Chen C.-M.A."/>
            <person name="Young T.L."/>
            <person name="Fisher D.E."/>
            <person name="Cepko C.L."/>
        </authorList>
    </citation>
    <scope>IDENTIFICATION</scope>
</reference>
<keyword id="KW-0010">Activator</keyword>
<keyword id="KW-0238">DNA-binding</keyword>
<keyword id="KW-0539">Nucleus</keyword>
<keyword id="KW-1185">Reference proteome</keyword>
<keyword id="KW-0678">Repressor</keyword>
<keyword id="KW-0804">Transcription</keyword>
<keyword id="KW-0805">Transcription regulation</keyword>